<keyword id="KW-0227">DNA damage</keyword>
<keyword id="KW-0233">DNA recombination</keyword>
<keyword id="KW-0234">DNA repair</keyword>
<keyword id="KW-0235">DNA replication</keyword>
<keyword id="KW-0238">DNA-binding</keyword>
<keyword id="KW-1185">Reference proteome</keyword>
<protein>
    <recommendedName>
        <fullName evidence="2">Single-stranded DNA-binding protein</fullName>
        <shortName evidence="2">SSB</shortName>
    </recommendedName>
</protein>
<name>SSB_SHIFL</name>
<proteinExistence type="inferred from homology"/>
<organism>
    <name type="scientific">Shigella flexneri</name>
    <dbReference type="NCBI Taxonomy" id="623"/>
    <lineage>
        <taxon>Bacteria</taxon>
        <taxon>Pseudomonadati</taxon>
        <taxon>Pseudomonadota</taxon>
        <taxon>Gammaproteobacteria</taxon>
        <taxon>Enterobacterales</taxon>
        <taxon>Enterobacteriaceae</taxon>
        <taxon>Shigella</taxon>
    </lineage>
</organism>
<accession>P0AGE3</accession>
<accession>P02339</accession>
<reference key="1">
    <citation type="journal article" date="2002" name="Nucleic Acids Res.">
        <title>Genome sequence of Shigella flexneri 2a: insights into pathogenicity through comparison with genomes of Escherichia coli K12 and O157.</title>
        <authorList>
            <person name="Jin Q."/>
            <person name="Yuan Z."/>
            <person name="Xu J."/>
            <person name="Wang Y."/>
            <person name="Shen Y."/>
            <person name="Lu W."/>
            <person name="Wang J."/>
            <person name="Liu H."/>
            <person name="Yang J."/>
            <person name="Yang F."/>
            <person name="Zhang X."/>
            <person name="Zhang J."/>
            <person name="Yang G."/>
            <person name="Wu H."/>
            <person name="Qu D."/>
            <person name="Dong J."/>
            <person name="Sun L."/>
            <person name="Xue Y."/>
            <person name="Zhao A."/>
            <person name="Gao Y."/>
            <person name="Zhu J."/>
            <person name="Kan B."/>
            <person name="Ding K."/>
            <person name="Chen S."/>
            <person name="Cheng H."/>
            <person name="Yao Z."/>
            <person name="He B."/>
            <person name="Chen R."/>
            <person name="Ma D."/>
            <person name="Qiang B."/>
            <person name="Wen Y."/>
            <person name="Hou Y."/>
            <person name="Yu J."/>
        </authorList>
    </citation>
    <scope>NUCLEOTIDE SEQUENCE [LARGE SCALE GENOMIC DNA]</scope>
    <source>
        <strain>301 / Serotype 2a</strain>
    </source>
</reference>
<reference key="2">
    <citation type="journal article" date="2003" name="Infect. Immun.">
        <title>Complete genome sequence and comparative genomics of Shigella flexneri serotype 2a strain 2457T.</title>
        <authorList>
            <person name="Wei J."/>
            <person name="Goldberg M.B."/>
            <person name="Burland V."/>
            <person name="Venkatesan M.M."/>
            <person name="Deng W."/>
            <person name="Fournier G."/>
            <person name="Mayhew G.F."/>
            <person name="Plunkett G. III"/>
            <person name="Rose D.J."/>
            <person name="Darling A."/>
            <person name="Mau B."/>
            <person name="Perna N.T."/>
            <person name="Payne S.M."/>
            <person name="Runyen-Janecky L.J."/>
            <person name="Zhou S."/>
            <person name="Schwartz D.C."/>
            <person name="Blattner F.R."/>
        </authorList>
    </citation>
    <scope>NUCLEOTIDE SEQUENCE [LARGE SCALE GENOMIC DNA]</scope>
    <source>
        <strain>ATCC 700930 / 2457T / Serotype 2a</strain>
    </source>
</reference>
<feature type="initiator methionine" description="Removed" evidence="1">
    <location>
        <position position="1"/>
    </location>
</feature>
<feature type="chain" id="PRO_0000096039" description="Single-stranded DNA-binding protein">
    <location>
        <begin position="2"/>
        <end position="178"/>
    </location>
</feature>
<feature type="domain" description="SSB" evidence="2">
    <location>
        <begin position="6"/>
        <end position="111"/>
    </location>
</feature>
<feature type="DNA-binding region" evidence="2">
    <location>
        <begin position="55"/>
        <end position="61"/>
    </location>
</feature>
<feature type="region of interest" description="Disordered" evidence="3">
    <location>
        <begin position="113"/>
        <end position="178"/>
    </location>
</feature>
<feature type="short sequence motif" description="Important for interaction with partner proteins" evidence="2">
    <location>
        <begin position="173"/>
        <end position="178"/>
    </location>
</feature>
<feature type="compositionally biased region" description="Gly residues" evidence="3">
    <location>
        <begin position="115"/>
        <end position="137"/>
    </location>
</feature>
<feature type="compositionally biased region" description="Low complexity" evidence="3">
    <location>
        <begin position="138"/>
        <end position="165"/>
    </location>
</feature>
<comment type="function">
    <text evidence="2">Plays an important role in DNA replication, recombination and repair. Binds to ssDNA and to an array of partner proteins to recruit them to their sites of action during DNA metabolism.</text>
</comment>
<comment type="subunit">
    <text evidence="2">Homotetramer.</text>
</comment>
<sequence>MASRGVNKVILVGNLGQDPEVRYMPNGGAVANITLATSESWRDKATGEMKEQTEWHRVVLFGKLAEVASEYLRKGSQVYIEGQLRTRKWTDQSGQDRYTTEVVVNVGGTMQMLGGRQGGGAPAGGNIGGGQPQGGWGQPQQPQGGNQFSGGAQSRPQQSAPAAPSNEPPMDFDDDIPF</sequence>
<dbReference type="EMBL" id="AE005674">
    <property type="protein sequence ID" value="AAN45567.2"/>
    <property type="molecule type" value="Genomic_DNA"/>
</dbReference>
<dbReference type="EMBL" id="AE014073">
    <property type="protein sequence ID" value="AAP18630.1"/>
    <property type="molecule type" value="Genomic_DNA"/>
</dbReference>
<dbReference type="RefSeq" id="NP_709860.2">
    <property type="nucleotide sequence ID" value="NC_004337.2"/>
</dbReference>
<dbReference type="BMRB" id="P0AGE3"/>
<dbReference type="SMR" id="P0AGE3"/>
<dbReference type="STRING" id="198214.SF4145"/>
<dbReference type="PaxDb" id="198214-SF4145"/>
<dbReference type="GeneID" id="1024145"/>
<dbReference type="KEGG" id="sfl:SF4145"/>
<dbReference type="KEGG" id="sfx:S3584"/>
<dbReference type="PATRIC" id="fig|198214.7.peg.4892"/>
<dbReference type="HOGENOM" id="CLU_078758_0_2_6"/>
<dbReference type="Proteomes" id="UP000001006">
    <property type="component" value="Chromosome"/>
</dbReference>
<dbReference type="Proteomes" id="UP000002673">
    <property type="component" value="Chromosome"/>
</dbReference>
<dbReference type="GO" id="GO:0009295">
    <property type="term" value="C:nucleoid"/>
    <property type="evidence" value="ECO:0007669"/>
    <property type="project" value="TreeGrafter"/>
</dbReference>
<dbReference type="GO" id="GO:0003697">
    <property type="term" value="F:single-stranded DNA binding"/>
    <property type="evidence" value="ECO:0007669"/>
    <property type="project" value="UniProtKB-UniRule"/>
</dbReference>
<dbReference type="GO" id="GO:0006310">
    <property type="term" value="P:DNA recombination"/>
    <property type="evidence" value="ECO:0007669"/>
    <property type="project" value="UniProtKB-UniRule"/>
</dbReference>
<dbReference type="GO" id="GO:0006281">
    <property type="term" value="P:DNA repair"/>
    <property type="evidence" value="ECO:0007669"/>
    <property type="project" value="UniProtKB-UniRule"/>
</dbReference>
<dbReference type="GO" id="GO:0006260">
    <property type="term" value="P:DNA replication"/>
    <property type="evidence" value="ECO:0007669"/>
    <property type="project" value="UniProtKB-UniRule"/>
</dbReference>
<dbReference type="CDD" id="cd04496">
    <property type="entry name" value="SSB_OBF"/>
    <property type="match status" value="1"/>
</dbReference>
<dbReference type="FunFam" id="2.40.50.140:FF:000065">
    <property type="entry name" value="Single-stranded DNA-binding protein"/>
    <property type="match status" value="1"/>
</dbReference>
<dbReference type="Gene3D" id="2.40.50.140">
    <property type="entry name" value="Nucleic acid-binding proteins"/>
    <property type="match status" value="1"/>
</dbReference>
<dbReference type="HAMAP" id="MF_00984">
    <property type="entry name" value="SSB"/>
    <property type="match status" value="1"/>
</dbReference>
<dbReference type="InterPro" id="IPR012340">
    <property type="entry name" value="NA-bd_OB-fold"/>
</dbReference>
<dbReference type="InterPro" id="IPR000424">
    <property type="entry name" value="Primosome_PriB/ssb"/>
</dbReference>
<dbReference type="InterPro" id="IPR011344">
    <property type="entry name" value="ssDNA-bd"/>
</dbReference>
<dbReference type="NCBIfam" id="NF006533">
    <property type="entry name" value="PRK09010.1"/>
    <property type="match status" value="1"/>
</dbReference>
<dbReference type="NCBIfam" id="TIGR00621">
    <property type="entry name" value="ssb"/>
    <property type="match status" value="1"/>
</dbReference>
<dbReference type="PANTHER" id="PTHR10302">
    <property type="entry name" value="SINGLE-STRANDED DNA-BINDING PROTEIN"/>
    <property type="match status" value="1"/>
</dbReference>
<dbReference type="PANTHER" id="PTHR10302:SF27">
    <property type="entry name" value="SINGLE-STRANDED DNA-BINDING PROTEIN"/>
    <property type="match status" value="1"/>
</dbReference>
<dbReference type="Pfam" id="PF00436">
    <property type="entry name" value="SSB"/>
    <property type="match status" value="1"/>
</dbReference>
<dbReference type="PIRSF" id="PIRSF002070">
    <property type="entry name" value="SSB"/>
    <property type="match status" value="1"/>
</dbReference>
<dbReference type="SUPFAM" id="SSF50249">
    <property type="entry name" value="Nucleic acid-binding proteins"/>
    <property type="match status" value="1"/>
</dbReference>
<dbReference type="PROSITE" id="PS50935">
    <property type="entry name" value="SSB"/>
    <property type="match status" value="1"/>
</dbReference>
<gene>
    <name type="primary">ssb</name>
    <name type="ordered locus">SF4145</name>
    <name type="ordered locus">S3584</name>
</gene>
<evidence type="ECO:0000250" key="1"/>
<evidence type="ECO:0000255" key="2">
    <source>
        <dbReference type="HAMAP-Rule" id="MF_00984"/>
    </source>
</evidence>
<evidence type="ECO:0000256" key="3">
    <source>
        <dbReference type="SAM" id="MobiDB-lite"/>
    </source>
</evidence>